<dbReference type="EMBL" id="CP001344">
    <property type="protein sequence ID" value="ACL46217.1"/>
    <property type="molecule type" value="Genomic_DNA"/>
</dbReference>
<dbReference type="SMR" id="B8HUL5"/>
<dbReference type="STRING" id="395961.Cyan7425_3900"/>
<dbReference type="KEGG" id="cyn:Cyan7425_3900"/>
<dbReference type="eggNOG" id="COG3705">
    <property type="taxonomic scope" value="Bacteria"/>
</dbReference>
<dbReference type="HOGENOM" id="CLU_025113_0_2_3"/>
<dbReference type="OrthoDB" id="9800814at2"/>
<dbReference type="UniPathway" id="UPA00031">
    <property type="reaction ID" value="UER00006"/>
</dbReference>
<dbReference type="GO" id="GO:0005737">
    <property type="term" value="C:cytoplasm"/>
    <property type="evidence" value="ECO:0007669"/>
    <property type="project" value="UniProtKB-SubCell"/>
</dbReference>
<dbReference type="GO" id="GO:0004821">
    <property type="term" value="F:histidine-tRNA ligase activity"/>
    <property type="evidence" value="ECO:0007669"/>
    <property type="project" value="TreeGrafter"/>
</dbReference>
<dbReference type="GO" id="GO:0006427">
    <property type="term" value="P:histidyl-tRNA aminoacylation"/>
    <property type="evidence" value="ECO:0007669"/>
    <property type="project" value="TreeGrafter"/>
</dbReference>
<dbReference type="GO" id="GO:0000105">
    <property type="term" value="P:L-histidine biosynthetic process"/>
    <property type="evidence" value="ECO:0007669"/>
    <property type="project" value="UniProtKB-UniRule"/>
</dbReference>
<dbReference type="CDD" id="cd00773">
    <property type="entry name" value="HisRS-like_core"/>
    <property type="match status" value="1"/>
</dbReference>
<dbReference type="Gene3D" id="3.30.930.10">
    <property type="entry name" value="Bira Bifunctional Protein, Domain 2"/>
    <property type="match status" value="1"/>
</dbReference>
<dbReference type="HAMAP" id="MF_00125">
    <property type="entry name" value="HisZ"/>
    <property type="match status" value="1"/>
</dbReference>
<dbReference type="InterPro" id="IPR006195">
    <property type="entry name" value="aa-tRNA-synth_II"/>
</dbReference>
<dbReference type="InterPro" id="IPR045864">
    <property type="entry name" value="aa-tRNA-synth_II/BPL/LPL"/>
</dbReference>
<dbReference type="InterPro" id="IPR041715">
    <property type="entry name" value="HisRS-like_core"/>
</dbReference>
<dbReference type="InterPro" id="IPR004516">
    <property type="entry name" value="HisRS/HisZ"/>
</dbReference>
<dbReference type="InterPro" id="IPR004517">
    <property type="entry name" value="HisZ"/>
</dbReference>
<dbReference type="NCBIfam" id="TIGR00443">
    <property type="entry name" value="hisZ_biosyn_reg"/>
    <property type="match status" value="1"/>
</dbReference>
<dbReference type="NCBIfam" id="NF008940">
    <property type="entry name" value="PRK12292.2-3"/>
    <property type="match status" value="1"/>
</dbReference>
<dbReference type="PANTHER" id="PTHR43707:SF1">
    <property type="entry name" value="HISTIDINE--TRNA LIGASE, MITOCHONDRIAL-RELATED"/>
    <property type="match status" value="1"/>
</dbReference>
<dbReference type="PANTHER" id="PTHR43707">
    <property type="entry name" value="HISTIDYL-TRNA SYNTHETASE"/>
    <property type="match status" value="1"/>
</dbReference>
<dbReference type="Pfam" id="PF13393">
    <property type="entry name" value="tRNA-synt_His"/>
    <property type="match status" value="1"/>
</dbReference>
<dbReference type="PIRSF" id="PIRSF001549">
    <property type="entry name" value="His-tRNA_synth"/>
    <property type="match status" value="1"/>
</dbReference>
<dbReference type="SUPFAM" id="SSF55681">
    <property type="entry name" value="Class II aaRS and biotin synthetases"/>
    <property type="match status" value="1"/>
</dbReference>
<dbReference type="PROSITE" id="PS50862">
    <property type="entry name" value="AA_TRNA_LIGASE_II"/>
    <property type="match status" value="1"/>
</dbReference>
<comment type="function">
    <text evidence="1">Required for the first step of histidine biosynthesis. May allow the feedback regulation of ATP phosphoribosyltransferase activity by histidine.</text>
</comment>
<comment type="pathway">
    <text evidence="1">Amino-acid biosynthesis; L-histidine biosynthesis; L-histidine from 5-phospho-alpha-D-ribose 1-diphosphate: step 1/9.</text>
</comment>
<comment type="subunit">
    <text evidence="1">Heteromultimer composed of HisG and HisZ subunits.</text>
</comment>
<comment type="subcellular location">
    <subcellularLocation>
        <location evidence="1">Cytoplasm</location>
    </subcellularLocation>
</comment>
<comment type="miscellaneous">
    <text>This function is generally fulfilled by the C-terminal part of HisG, which is missing in some bacteria such as this one.</text>
</comment>
<comment type="similarity">
    <text evidence="1">Belongs to the class-II aminoacyl-tRNA synthetase family. HisZ subfamily.</text>
</comment>
<accession>B8HUL5</accession>
<protein>
    <recommendedName>
        <fullName evidence="1">ATP phosphoribosyltransferase regulatory subunit</fullName>
    </recommendedName>
</protein>
<reference key="1">
    <citation type="journal article" date="2011" name="MBio">
        <title>Novel metabolic attributes of the genus Cyanothece, comprising a group of unicellular nitrogen-fixing Cyanobacteria.</title>
        <authorList>
            <person name="Bandyopadhyay A."/>
            <person name="Elvitigala T."/>
            <person name="Welsh E."/>
            <person name="Stockel J."/>
            <person name="Liberton M."/>
            <person name="Min H."/>
            <person name="Sherman L.A."/>
            <person name="Pakrasi H.B."/>
        </authorList>
    </citation>
    <scope>NUCLEOTIDE SEQUENCE [LARGE SCALE GENOMIC DNA]</scope>
    <source>
        <strain>PCC 7425 / ATCC 29141</strain>
    </source>
</reference>
<feature type="chain" id="PRO_1000122667" description="ATP phosphoribosyltransferase regulatory subunit">
    <location>
        <begin position="1"/>
        <end position="401"/>
    </location>
</feature>
<organism>
    <name type="scientific">Cyanothece sp. (strain PCC 7425 / ATCC 29141)</name>
    <dbReference type="NCBI Taxonomy" id="395961"/>
    <lineage>
        <taxon>Bacteria</taxon>
        <taxon>Bacillati</taxon>
        <taxon>Cyanobacteriota</taxon>
        <taxon>Cyanophyceae</taxon>
        <taxon>Gomontiellales</taxon>
        <taxon>Cyanothecaceae</taxon>
        <taxon>Cyanothece</taxon>
    </lineage>
</organism>
<proteinExistence type="inferred from homology"/>
<name>HISZ_CYAP4</name>
<evidence type="ECO:0000255" key="1">
    <source>
        <dbReference type="HAMAP-Rule" id="MF_00125"/>
    </source>
</evidence>
<sequence length="401" mass="45028">MIYQPPAGARDVLPLEVAQKRWIEQRLQQTFHRWSYQQIITPTLERLETLMAGGAIQPETVIQFWDAEEGLLGLRPELTASIARAAVTRMAGAIYPQRLYYSANIFRRSPGMELSSQQEFFQTGVELLGGSGLADGEILLLLQDCLHSLGLPEWHVVLGEAGLTRSLLSNFPLELQPHIRQAIARLDRVALTELPSDLRQPALDLLDLRGEPASVLQRLAQLDLKPEQRQIVHHLKTLLELVGDRFPLTLDLSLIQTFDYYTGIVFDVIATGEREQRLLGEGGRYDQLLARYHPGGESLPGIGFALNLEDLHQVLLPTGQLPQQMPTSQWLIVPVHPEAIAAAFSYAEKLRGQPESQELRVEMALEWLSPEATREYARCRQITYIAWIEADGSPQIEAVKG</sequence>
<keyword id="KW-0028">Amino-acid biosynthesis</keyword>
<keyword id="KW-0963">Cytoplasm</keyword>
<keyword id="KW-0368">Histidine biosynthesis</keyword>
<gene>
    <name evidence="1" type="primary">hisZ</name>
    <name type="ordered locus">Cyan7425_3900</name>
</gene>